<dbReference type="EC" id="5.4.99.25" evidence="1"/>
<dbReference type="EMBL" id="CP000312">
    <property type="protein sequence ID" value="ABG87727.1"/>
    <property type="molecule type" value="Genomic_DNA"/>
</dbReference>
<dbReference type="RefSeq" id="WP_011592587.1">
    <property type="nucleotide sequence ID" value="NC_008262.1"/>
</dbReference>
<dbReference type="SMR" id="Q0SSD7"/>
<dbReference type="KEGG" id="cpr:CPR_1655"/>
<dbReference type="Proteomes" id="UP000001824">
    <property type="component" value="Chromosome"/>
</dbReference>
<dbReference type="GO" id="GO:0003723">
    <property type="term" value="F:RNA binding"/>
    <property type="evidence" value="ECO:0007669"/>
    <property type="project" value="InterPro"/>
</dbReference>
<dbReference type="GO" id="GO:0160148">
    <property type="term" value="F:tRNA pseudouridine(55) synthase activity"/>
    <property type="evidence" value="ECO:0007669"/>
    <property type="project" value="UniProtKB-EC"/>
</dbReference>
<dbReference type="GO" id="GO:1990481">
    <property type="term" value="P:mRNA pseudouridine synthesis"/>
    <property type="evidence" value="ECO:0007669"/>
    <property type="project" value="TreeGrafter"/>
</dbReference>
<dbReference type="GO" id="GO:0031119">
    <property type="term" value="P:tRNA pseudouridine synthesis"/>
    <property type="evidence" value="ECO:0007669"/>
    <property type="project" value="UniProtKB-UniRule"/>
</dbReference>
<dbReference type="CDD" id="cd02573">
    <property type="entry name" value="PseudoU_synth_EcTruB"/>
    <property type="match status" value="1"/>
</dbReference>
<dbReference type="FunFam" id="3.30.2350.10:FF:000011">
    <property type="entry name" value="tRNA pseudouridine synthase B"/>
    <property type="match status" value="1"/>
</dbReference>
<dbReference type="Gene3D" id="3.30.2350.10">
    <property type="entry name" value="Pseudouridine synthase"/>
    <property type="match status" value="1"/>
</dbReference>
<dbReference type="HAMAP" id="MF_01080">
    <property type="entry name" value="TruB_bact"/>
    <property type="match status" value="1"/>
</dbReference>
<dbReference type="InterPro" id="IPR020103">
    <property type="entry name" value="PsdUridine_synth_cat_dom_sf"/>
</dbReference>
<dbReference type="InterPro" id="IPR002501">
    <property type="entry name" value="PsdUridine_synth_N"/>
</dbReference>
<dbReference type="InterPro" id="IPR014780">
    <property type="entry name" value="tRNA_psdUridine_synth_TruB"/>
</dbReference>
<dbReference type="InterPro" id="IPR032819">
    <property type="entry name" value="TruB_C"/>
</dbReference>
<dbReference type="NCBIfam" id="TIGR00431">
    <property type="entry name" value="TruB"/>
    <property type="match status" value="1"/>
</dbReference>
<dbReference type="PANTHER" id="PTHR13767:SF2">
    <property type="entry name" value="PSEUDOURIDYLATE SYNTHASE TRUB1"/>
    <property type="match status" value="1"/>
</dbReference>
<dbReference type="PANTHER" id="PTHR13767">
    <property type="entry name" value="TRNA-PSEUDOURIDINE SYNTHASE"/>
    <property type="match status" value="1"/>
</dbReference>
<dbReference type="Pfam" id="PF16198">
    <property type="entry name" value="TruB_C_2"/>
    <property type="match status" value="1"/>
</dbReference>
<dbReference type="Pfam" id="PF01509">
    <property type="entry name" value="TruB_N"/>
    <property type="match status" value="1"/>
</dbReference>
<dbReference type="SUPFAM" id="SSF55120">
    <property type="entry name" value="Pseudouridine synthase"/>
    <property type="match status" value="1"/>
</dbReference>
<proteinExistence type="inferred from homology"/>
<protein>
    <recommendedName>
        <fullName evidence="1">tRNA pseudouridine synthase B</fullName>
        <ecNumber evidence="1">5.4.99.25</ecNumber>
    </recommendedName>
    <alternativeName>
        <fullName evidence="1">tRNA pseudouridine(55) synthase</fullName>
        <shortName evidence="1">Psi55 synthase</shortName>
    </alternativeName>
    <alternativeName>
        <fullName evidence="1">tRNA pseudouridylate synthase</fullName>
    </alternativeName>
    <alternativeName>
        <fullName evidence="1">tRNA-uridine isomerase</fullName>
    </alternativeName>
</protein>
<gene>
    <name evidence="1" type="primary">truB</name>
    <name type="ordered locus">CPR_1655</name>
</gene>
<sequence>MNGVINIYKNTGMTSFDVVAMVRRVAKMKKVGHTGTLDPEASGVLPVCLGKATKIIDYIMENKKVYRVNLKLGMVTDTYDLEGEVLREEDASHITKDEILNCINSFVGTIDQVPPMYSALKQNGVRLYELARQGIEVHREARKITIYSIENIKIESNDNIQMDVCCSKGTYIRSLCYDIGEKLNVGATMTALERIQNGPFIKEEAINIEDLTEELLEKHIISIEKALDSFEKITVNEKFGKLLRNGVKVFDNRMYSEEVEFNKLYRVYEDNGVFLGLGKRDEKGFKLEKLLIEE</sequence>
<keyword id="KW-0413">Isomerase</keyword>
<keyword id="KW-0819">tRNA processing</keyword>
<name>TRUB_CLOPS</name>
<accession>Q0SSD7</accession>
<feature type="chain" id="PRO_1000084576" description="tRNA pseudouridine synthase B">
    <location>
        <begin position="1"/>
        <end position="294"/>
    </location>
</feature>
<feature type="active site" description="Nucleophile" evidence="1">
    <location>
        <position position="38"/>
    </location>
</feature>
<reference key="1">
    <citation type="journal article" date="2006" name="Genome Res.">
        <title>Skewed genomic variability in strains of the toxigenic bacterial pathogen, Clostridium perfringens.</title>
        <authorList>
            <person name="Myers G.S.A."/>
            <person name="Rasko D.A."/>
            <person name="Cheung J.K."/>
            <person name="Ravel J."/>
            <person name="Seshadri R."/>
            <person name="DeBoy R.T."/>
            <person name="Ren Q."/>
            <person name="Varga J."/>
            <person name="Awad M.M."/>
            <person name="Brinkac L.M."/>
            <person name="Daugherty S.C."/>
            <person name="Haft D.H."/>
            <person name="Dodson R.J."/>
            <person name="Madupu R."/>
            <person name="Nelson W.C."/>
            <person name="Rosovitz M.J."/>
            <person name="Sullivan S.A."/>
            <person name="Khouri H."/>
            <person name="Dimitrov G.I."/>
            <person name="Watkins K.L."/>
            <person name="Mulligan S."/>
            <person name="Benton J."/>
            <person name="Radune D."/>
            <person name="Fisher D.J."/>
            <person name="Atkins H.S."/>
            <person name="Hiscox T."/>
            <person name="Jost B.H."/>
            <person name="Billington S.J."/>
            <person name="Songer J.G."/>
            <person name="McClane B.A."/>
            <person name="Titball R.W."/>
            <person name="Rood J.I."/>
            <person name="Melville S.B."/>
            <person name="Paulsen I.T."/>
        </authorList>
    </citation>
    <scope>NUCLEOTIDE SEQUENCE [LARGE SCALE GENOMIC DNA]</scope>
    <source>
        <strain>SM101 / Type A</strain>
    </source>
</reference>
<evidence type="ECO:0000255" key="1">
    <source>
        <dbReference type="HAMAP-Rule" id="MF_01080"/>
    </source>
</evidence>
<comment type="function">
    <text evidence="1">Responsible for synthesis of pseudouridine from uracil-55 in the psi GC loop of transfer RNAs.</text>
</comment>
<comment type="catalytic activity">
    <reaction evidence="1">
        <text>uridine(55) in tRNA = pseudouridine(55) in tRNA</text>
        <dbReference type="Rhea" id="RHEA:42532"/>
        <dbReference type="Rhea" id="RHEA-COMP:10101"/>
        <dbReference type="Rhea" id="RHEA-COMP:10102"/>
        <dbReference type="ChEBI" id="CHEBI:65314"/>
        <dbReference type="ChEBI" id="CHEBI:65315"/>
        <dbReference type="EC" id="5.4.99.25"/>
    </reaction>
</comment>
<comment type="similarity">
    <text evidence="1">Belongs to the pseudouridine synthase TruB family. Type 1 subfamily.</text>
</comment>
<organism>
    <name type="scientific">Clostridium perfringens (strain SM101 / Type A)</name>
    <dbReference type="NCBI Taxonomy" id="289380"/>
    <lineage>
        <taxon>Bacteria</taxon>
        <taxon>Bacillati</taxon>
        <taxon>Bacillota</taxon>
        <taxon>Clostridia</taxon>
        <taxon>Eubacteriales</taxon>
        <taxon>Clostridiaceae</taxon>
        <taxon>Clostridium</taxon>
    </lineage>
</organism>